<feature type="chain" id="PRO_1000090633" description="Phospho-N-acetylmuramoyl-pentapeptide-transferase">
    <location>
        <begin position="1"/>
        <end position="359"/>
    </location>
</feature>
<feature type="transmembrane region" description="Helical" evidence="1">
    <location>
        <begin position="24"/>
        <end position="44"/>
    </location>
</feature>
<feature type="transmembrane region" description="Helical" evidence="1">
    <location>
        <begin position="72"/>
        <end position="92"/>
    </location>
</feature>
<feature type="transmembrane region" description="Helical" evidence="1">
    <location>
        <begin position="100"/>
        <end position="120"/>
    </location>
</feature>
<feature type="transmembrane region" description="Helical" evidence="1">
    <location>
        <begin position="134"/>
        <end position="154"/>
    </location>
</feature>
<feature type="transmembrane region" description="Helical" evidence="1">
    <location>
        <begin position="170"/>
        <end position="190"/>
    </location>
</feature>
<feature type="transmembrane region" description="Helical" evidence="1">
    <location>
        <begin position="197"/>
        <end position="217"/>
    </location>
</feature>
<feature type="transmembrane region" description="Helical" evidence="1">
    <location>
        <begin position="234"/>
        <end position="254"/>
    </location>
</feature>
<feature type="transmembrane region" description="Helical" evidence="1">
    <location>
        <begin position="261"/>
        <end position="281"/>
    </location>
</feature>
<feature type="transmembrane region" description="Helical" evidence="1">
    <location>
        <begin position="289"/>
        <end position="309"/>
    </location>
</feature>
<feature type="transmembrane region" description="Helical" evidence="1">
    <location>
        <begin position="336"/>
        <end position="356"/>
    </location>
</feature>
<gene>
    <name evidence="1" type="primary">mraY</name>
    <name type="ordered locus">HY04AAS1_1185</name>
</gene>
<protein>
    <recommendedName>
        <fullName evidence="1">Phospho-N-acetylmuramoyl-pentapeptide-transferase</fullName>
        <ecNumber evidence="1">2.7.8.13</ecNumber>
    </recommendedName>
    <alternativeName>
        <fullName evidence="1">UDP-MurNAc-pentapeptide phosphotransferase</fullName>
    </alternativeName>
</protein>
<keyword id="KW-0131">Cell cycle</keyword>
<keyword id="KW-0132">Cell division</keyword>
<keyword id="KW-0997">Cell inner membrane</keyword>
<keyword id="KW-1003">Cell membrane</keyword>
<keyword id="KW-0133">Cell shape</keyword>
<keyword id="KW-0961">Cell wall biogenesis/degradation</keyword>
<keyword id="KW-0460">Magnesium</keyword>
<keyword id="KW-0472">Membrane</keyword>
<keyword id="KW-0479">Metal-binding</keyword>
<keyword id="KW-0573">Peptidoglycan synthesis</keyword>
<keyword id="KW-0808">Transferase</keyword>
<keyword id="KW-0812">Transmembrane</keyword>
<keyword id="KW-1133">Transmembrane helix</keyword>
<organism>
    <name type="scientific">Hydrogenobaculum sp. (strain Y04AAS1)</name>
    <dbReference type="NCBI Taxonomy" id="380749"/>
    <lineage>
        <taxon>Bacteria</taxon>
        <taxon>Pseudomonadati</taxon>
        <taxon>Aquificota</taxon>
        <taxon>Aquificia</taxon>
        <taxon>Aquificales</taxon>
        <taxon>Aquificaceae</taxon>
        <taxon>Hydrogenobaculum</taxon>
    </lineage>
</organism>
<sequence length="359" mass="39763">MLYWLGLVLKSHIFLFNVLRYITFRALIAVIVSFLITLVLSPIFMRKVTALNRLYGGYVREDTPETHSKKKFVPSMGGLIIILSLELSSILLMRLDIAQTWIMAFTVFGFAIVGFIDDFVKLKNKKGISARSKMLGQIIVSFVSASLLYFVMHIDTHIYFPFFKSLKLDLGYFYIVFVMLILIATSNAVNLTDGLDGLAIVPAMTTAFALGIISYVAGNSILARYLEIHYVENAGELAIFGMAVVGAGLGFLWFNSFPAQMFMGDVGSLGLGAALGMLAIMSKQELTLIIAGGVFVVEALSVIIQVSVFKITKGKRVFKMAPIHHHFELNGTPEPKIVVRIWIISILLAIFTIATLKLR</sequence>
<evidence type="ECO:0000255" key="1">
    <source>
        <dbReference type="HAMAP-Rule" id="MF_00038"/>
    </source>
</evidence>
<proteinExistence type="inferred from homology"/>
<accession>B4U9Q9</accession>
<comment type="function">
    <text evidence="1">Catalyzes the initial step of the lipid cycle reactions in the biosynthesis of the cell wall peptidoglycan: transfers peptidoglycan precursor phospho-MurNAc-pentapeptide from UDP-MurNAc-pentapeptide onto the lipid carrier undecaprenyl phosphate, yielding undecaprenyl-pyrophosphoryl-MurNAc-pentapeptide, known as lipid I.</text>
</comment>
<comment type="catalytic activity">
    <reaction evidence="1">
        <text>UDP-N-acetyl-alpha-D-muramoyl-L-alanyl-gamma-D-glutamyl-meso-2,6-diaminopimeloyl-D-alanyl-D-alanine + di-trans,octa-cis-undecaprenyl phosphate = di-trans,octa-cis-undecaprenyl diphospho-N-acetyl-alpha-D-muramoyl-L-alanyl-D-glutamyl-meso-2,6-diaminopimeloyl-D-alanyl-D-alanine + UMP</text>
        <dbReference type="Rhea" id="RHEA:28386"/>
        <dbReference type="ChEBI" id="CHEBI:57865"/>
        <dbReference type="ChEBI" id="CHEBI:60392"/>
        <dbReference type="ChEBI" id="CHEBI:61386"/>
        <dbReference type="ChEBI" id="CHEBI:61387"/>
        <dbReference type="EC" id="2.7.8.13"/>
    </reaction>
</comment>
<comment type="cofactor">
    <cofactor evidence="1">
        <name>Mg(2+)</name>
        <dbReference type="ChEBI" id="CHEBI:18420"/>
    </cofactor>
</comment>
<comment type="pathway">
    <text evidence="1">Cell wall biogenesis; peptidoglycan biosynthesis.</text>
</comment>
<comment type="subcellular location">
    <subcellularLocation>
        <location evidence="1">Cell inner membrane</location>
        <topology evidence="1">Multi-pass membrane protein</topology>
    </subcellularLocation>
</comment>
<comment type="similarity">
    <text evidence="1">Belongs to the glycosyltransferase 4 family. MraY subfamily.</text>
</comment>
<reference key="1">
    <citation type="journal article" date="2009" name="J. Bacteriol.">
        <title>Complete and draft genome sequences of six members of the Aquificales.</title>
        <authorList>
            <person name="Reysenbach A.-L."/>
            <person name="Hamamura N."/>
            <person name="Podar M."/>
            <person name="Griffiths E."/>
            <person name="Ferreira S."/>
            <person name="Hochstein R."/>
            <person name="Heidelberg J."/>
            <person name="Johnson J."/>
            <person name="Mead D."/>
            <person name="Pohorille A."/>
            <person name="Sarmiento M."/>
            <person name="Schweighofer K."/>
            <person name="Seshadri R."/>
            <person name="Voytek M.A."/>
        </authorList>
    </citation>
    <scope>NUCLEOTIDE SEQUENCE [LARGE SCALE GENOMIC DNA]</scope>
    <source>
        <strain>Y04AAS1</strain>
    </source>
</reference>
<dbReference type="EC" id="2.7.8.13" evidence="1"/>
<dbReference type="EMBL" id="CP001130">
    <property type="protein sequence ID" value="ACG57870.1"/>
    <property type="molecule type" value="Genomic_DNA"/>
</dbReference>
<dbReference type="RefSeq" id="WP_012514226.1">
    <property type="nucleotide sequence ID" value="NC_011126.1"/>
</dbReference>
<dbReference type="SMR" id="B4U9Q9"/>
<dbReference type="STRING" id="380749.HY04AAS1_1185"/>
<dbReference type="KEGG" id="hya:HY04AAS1_1185"/>
<dbReference type="eggNOG" id="COG0472">
    <property type="taxonomic scope" value="Bacteria"/>
</dbReference>
<dbReference type="HOGENOM" id="CLU_023982_0_0_0"/>
<dbReference type="OrthoDB" id="9805475at2"/>
<dbReference type="UniPathway" id="UPA00219"/>
<dbReference type="GO" id="GO:0005886">
    <property type="term" value="C:plasma membrane"/>
    <property type="evidence" value="ECO:0007669"/>
    <property type="project" value="UniProtKB-SubCell"/>
</dbReference>
<dbReference type="GO" id="GO:0046872">
    <property type="term" value="F:metal ion binding"/>
    <property type="evidence" value="ECO:0007669"/>
    <property type="project" value="UniProtKB-KW"/>
</dbReference>
<dbReference type="GO" id="GO:0008963">
    <property type="term" value="F:phospho-N-acetylmuramoyl-pentapeptide-transferase activity"/>
    <property type="evidence" value="ECO:0007669"/>
    <property type="project" value="UniProtKB-UniRule"/>
</dbReference>
<dbReference type="GO" id="GO:0051992">
    <property type="term" value="F:UDP-N-acetylmuramoyl-L-alanyl-D-glutamyl-meso-2,6-diaminopimelyl-D-alanyl-D-alanine:undecaprenyl-phosphate transferase activity"/>
    <property type="evidence" value="ECO:0007669"/>
    <property type="project" value="RHEA"/>
</dbReference>
<dbReference type="GO" id="GO:0051301">
    <property type="term" value="P:cell division"/>
    <property type="evidence" value="ECO:0007669"/>
    <property type="project" value="UniProtKB-KW"/>
</dbReference>
<dbReference type="GO" id="GO:0071555">
    <property type="term" value="P:cell wall organization"/>
    <property type="evidence" value="ECO:0007669"/>
    <property type="project" value="UniProtKB-KW"/>
</dbReference>
<dbReference type="GO" id="GO:0009252">
    <property type="term" value="P:peptidoglycan biosynthetic process"/>
    <property type="evidence" value="ECO:0007669"/>
    <property type="project" value="UniProtKB-UniRule"/>
</dbReference>
<dbReference type="GO" id="GO:0008360">
    <property type="term" value="P:regulation of cell shape"/>
    <property type="evidence" value="ECO:0007669"/>
    <property type="project" value="UniProtKB-KW"/>
</dbReference>
<dbReference type="CDD" id="cd06852">
    <property type="entry name" value="GT_MraY"/>
    <property type="match status" value="1"/>
</dbReference>
<dbReference type="HAMAP" id="MF_00038">
    <property type="entry name" value="MraY"/>
    <property type="match status" value="1"/>
</dbReference>
<dbReference type="InterPro" id="IPR000715">
    <property type="entry name" value="Glycosyl_transferase_4"/>
</dbReference>
<dbReference type="InterPro" id="IPR003524">
    <property type="entry name" value="PNAcMuramoyl-5peptid_Trfase"/>
</dbReference>
<dbReference type="InterPro" id="IPR018480">
    <property type="entry name" value="PNAcMuramoyl-5peptid_Trfase_CS"/>
</dbReference>
<dbReference type="NCBIfam" id="TIGR00445">
    <property type="entry name" value="mraY"/>
    <property type="match status" value="1"/>
</dbReference>
<dbReference type="PANTHER" id="PTHR22926">
    <property type="entry name" value="PHOSPHO-N-ACETYLMURAMOYL-PENTAPEPTIDE-TRANSFERASE"/>
    <property type="match status" value="1"/>
</dbReference>
<dbReference type="PANTHER" id="PTHR22926:SF5">
    <property type="entry name" value="PHOSPHO-N-ACETYLMURAMOYL-PENTAPEPTIDE-TRANSFERASE HOMOLOG"/>
    <property type="match status" value="1"/>
</dbReference>
<dbReference type="Pfam" id="PF00953">
    <property type="entry name" value="Glycos_transf_4"/>
    <property type="match status" value="1"/>
</dbReference>
<dbReference type="PROSITE" id="PS01347">
    <property type="entry name" value="MRAY_1"/>
    <property type="match status" value="1"/>
</dbReference>
<dbReference type="PROSITE" id="PS01348">
    <property type="entry name" value="MRAY_2"/>
    <property type="match status" value="1"/>
</dbReference>
<name>MRAY_HYDS0</name>